<gene>
    <name type="primary">gatZ</name>
</gene>
<comment type="function">
    <text evidence="2">Component of the tagatose-1,6-bisphosphate aldolase GatYZ that is required for full activity and stability of the Y subunit. Could have a chaperone-like function for the proper and stable folding of GatY. When expressed alone, GatZ does not show any aldolase activity. Is involved in the catabolism of galactitol.</text>
</comment>
<comment type="pathway">
    <text>Carbohydrate metabolism; D-tagatose 6-phosphate degradation; D-glyceraldehyde 3-phosphate and glycerone phosphate from D-tagatose 6-phosphate: step 2/2.</text>
</comment>
<comment type="subunit">
    <text evidence="1">Forms a complex with GatY.</text>
</comment>
<comment type="induction">
    <text evidence="2">Constitutively expressed.</text>
</comment>
<comment type="similarity">
    <text evidence="3">Belongs to the GatZ/KbaZ family. GatZ subfamily.</text>
</comment>
<comment type="sequence caution" evidence="3">
    <conflict type="frameshift">
        <sequence resource="EMBL-CDS" id="CAA56227"/>
    </conflict>
</comment>
<proteinExistence type="evidence at protein level"/>
<organism>
    <name type="scientific">Escherichia coli</name>
    <dbReference type="NCBI Taxonomy" id="562"/>
    <lineage>
        <taxon>Bacteria</taxon>
        <taxon>Pseudomonadati</taxon>
        <taxon>Pseudomonadota</taxon>
        <taxon>Gammaproteobacteria</taxon>
        <taxon>Enterobacterales</taxon>
        <taxon>Enterobacteriaceae</taxon>
        <taxon>Escherichia</taxon>
    </lineage>
</organism>
<keyword id="KW-0298">Galactitol metabolism</keyword>
<name>GATZ_ECOLX</name>
<feature type="chain" id="PRO_0000355358" description="D-tagatose-1,6-bisphosphate aldolase subunit GatZ">
    <location>
        <begin position="1"/>
        <end position="420"/>
    </location>
</feature>
<dbReference type="EMBL" id="X79837">
    <property type="protein sequence ID" value="CAA56227.1"/>
    <property type="status" value="ALT_FRAME"/>
    <property type="molecule type" value="Genomic_DNA"/>
</dbReference>
<dbReference type="RefSeq" id="WP_001530548.1">
    <property type="nucleotide sequence ID" value="NZ_WSWV01000090.1"/>
</dbReference>
<dbReference type="SMR" id="P0C8J9"/>
<dbReference type="STRING" id="585034.ECIAI1_2169"/>
<dbReference type="eggNOG" id="COG4573">
    <property type="taxonomic scope" value="Bacteria"/>
</dbReference>
<dbReference type="UniPathway" id="UPA00704">
    <property type="reaction ID" value="UER00716"/>
</dbReference>
<dbReference type="GO" id="GO:0005886">
    <property type="term" value="C:plasma membrane"/>
    <property type="evidence" value="ECO:0007669"/>
    <property type="project" value="TreeGrafter"/>
</dbReference>
<dbReference type="GO" id="GO:2001059">
    <property type="term" value="P:D-tagatose 6-phosphate catabolic process"/>
    <property type="evidence" value="ECO:0007669"/>
    <property type="project" value="UniProtKB-UniRule"/>
</dbReference>
<dbReference type="GO" id="GO:0019402">
    <property type="term" value="P:galactitol metabolic process"/>
    <property type="evidence" value="ECO:0007669"/>
    <property type="project" value="UniProtKB-KW"/>
</dbReference>
<dbReference type="GO" id="GO:0009401">
    <property type="term" value="P:phosphoenolpyruvate-dependent sugar phosphotransferase system"/>
    <property type="evidence" value="ECO:0007669"/>
    <property type="project" value="TreeGrafter"/>
</dbReference>
<dbReference type="FunFam" id="3.20.20.70:FF:000141">
    <property type="entry name" value="D-tagatose-1,6-bisphosphate aldolase subunit GatZ"/>
    <property type="match status" value="1"/>
</dbReference>
<dbReference type="Gene3D" id="3.20.20.70">
    <property type="entry name" value="Aldolase class I"/>
    <property type="match status" value="1"/>
</dbReference>
<dbReference type="Gene3D" id="1.10.400.20">
    <property type="entry name" value="putative tagatose 6-phosphate kinase domain like"/>
    <property type="match status" value="1"/>
</dbReference>
<dbReference type="HAMAP" id="MF_01296">
    <property type="entry name" value="Tagatose_aldol_GatZ"/>
    <property type="match status" value="1"/>
</dbReference>
<dbReference type="InterPro" id="IPR013785">
    <property type="entry name" value="Aldolase_TIM"/>
</dbReference>
<dbReference type="InterPro" id="IPR012062">
    <property type="entry name" value="GatZ/KbaZ-like"/>
</dbReference>
<dbReference type="InterPro" id="IPR050303">
    <property type="entry name" value="GatZ_KbaZ_carbometab"/>
</dbReference>
<dbReference type="InterPro" id="IPR023436">
    <property type="entry name" value="TagBP_ald_GatZ"/>
</dbReference>
<dbReference type="NCBIfam" id="TIGR02810">
    <property type="entry name" value="agaZ_gatZ"/>
    <property type="match status" value="1"/>
</dbReference>
<dbReference type="NCBIfam" id="NF011626">
    <property type="entry name" value="PRK15052.1"/>
    <property type="match status" value="1"/>
</dbReference>
<dbReference type="PANTHER" id="PTHR32502:SF12">
    <property type="entry name" value="D-TAGATOSE-1,6-BISPHOSPHATE ALDOLASE SUBUNIT GATZ"/>
    <property type="match status" value="1"/>
</dbReference>
<dbReference type="PANTHER" id="PTHR32502">
    <property type="entry name" value="N-ACETYLGALACTOSAMINE PERMEASE II COMPONENT-RELATED"/>
    <property type="match status" value="1"/>
</dbReference>
<dbReference type="Pfam" id="PF08013">
    <property type="entry name" value="GatZ_KbaZ-like"/>
    <property type="match status" value="1"/>
</dbReference>
<dbReference type="PIRSF" id="PIRSF009264">
    <property type="entry name" value="TagBP_ald_AgaZ"/>
    <property type="match status" value="1"/>
</dbReference>
<dbReference type="SUPFAM" id="SSF51569">
    <property type="entry name" value="Aldolase"/>
    <property type="match status" value="1"/>
</dbReference>
<accession>P0C8J9</accession>
<accession>P37191</accession>
<accession>P76414</accession>
<sequence>MKTLIARHKAGEHIGICSVCSAHPLVIEAALAFDRNSTRKVLIEATSNQVNQFGGYTGMTPADFREFVFTIADKVGFARERIILGGDHLGPNCWQQENADAAMEKSVELVKAYVRAGFSKIHLDASMSCAGDPIPLAPETVAERAAVLCFAAESVATDCQREQLSYVIGTEVPVPGGEASAIQSVHITRVEDAANTLRTHQKAFIARGLAEALTRVIAIVVQPGVEFDHSNIIHYQPQEAQPLAQWIENTRMVYEAHSTDYQTRTAYWELVRDHFAILKVGPALTFALREAIFALAQIEQELIAPENRSGCLAVIEEVMFDEPQYWKKYYRTGFNDSLLDIRYSLSDRIRYYWPHSRIKNSVETMMVNLEGMEIPLGMISQYLPKQFERIQSGELSAIPHQLIMDKIYDVLRAYRYGCAE</sequence>
<protein>
    <recommendedName>
        <fullName>D-tagatose-1,6-bisphosphate aldolase subunit GatZ</fullName>
    </recommendedName>
</protein>
<reference key="1">
    <citation type="journal article" date="1995" name="Biochim. Biophys. Acta">
        <title>Sequence of the gat operon for galactitol utilization from a wild-type strain EC3132 of Escherichia coli.</title>
        <authorList>
            <person name="Nobelmann B."/>
            <person name="Lengeler J.W."/>
        </authorList>
    </citation>
    <scope>NUCLEOTIDE SEQUENCE [GENOMIC DNA]</scope>
    <source>
        <strain>EC3132</strain>
    </source>
</reference>
<reference key="2">
    <citation type="journal article" date="1996" name="J. Bacteriol.">
        <title>Molecular analysis of the gat genes from Escherichia coli and of their roles in galactitol transport and metabolism.</title>
        <authorList>
            <person name="Nobelmann B."/>
            <person name="Lengeler J.W."/>
        </authorList>
    </citation>
    <scope>FUNCTION IN GALACTITOL CATABOLISM</scope>
    <scope>INDUCTION</scope>
    <source>
        <strain>EC3132</strain>
    </source>
</reference>
<evidence type="ECO:0000250" key="1"/>
<evidence type="ECO:0000269" key="2">
    <source>
    </source>
</evidence>
<evidence type="ECO:0000305" key="3"/>